<keyword id="KW-0028">Amino-acid biosynthesis</keyword>
<keyword id="KW-0963">Cytoplasm</keyword>
<keyword id="KW-0554">One-carbon metabolism</keyword>
<keyword id="KW-0663">Pyridoxal phosphate</keyword>
<keyword id="KW-1185">Reference proteome</keyword>
<keyword id="KW-0808">Transferase</keyword>
<feature type="chain" id="PRO_1000074888" description="Serine hydroxymethyltransferase">
    <location>
        <begin position="1"/>
        <end position="438"/>
    </location>
</feature>
<feature type="binding site" evidence="1">
    <location>
        <position position="133"/>
    </location>
    <ligand>
        <name>(6S)-5,6,7,8-tetrahydrofolate</name>
        <dbReference type="ChEBI" id="CHEBI:57453"/>
    </ligand>
</feature>
<feature type="binding site" evidence="1">
    <location>
        <begin position="137"/>
        <end position="139"/>
    </location>
    <ligand>
        <name>(6S)-5,6,7,8-tetrahydrofolate</name>
        <dbReference type="ChEBI" id="CHEBI:57453"/>
    </ligand>
</feature>
<feature type="site" description="Plays an important role in substrate specificity" evidence="1">
    <location>
        <position position="241"/>
    </location>
</feature>
<feature type="modified residue" description="N6-(pyridoxal phosphate)lysine" evidence="1">
    <location>
        <position position="242"/>
    </location>
</feature>
<organism>
    <name type="scientific">Brucella canis (strain ATCC 23365 / NCTC 10854 / RM-666)</name>
    <dbReference type="NCBI Taxonomy" id="483179"/>
    <lineage>
        <taxon>Bacteria</taxon>
        <taxon>Pseudomonadati</taxon>
        <taxon>Pseudomonadota</taxon>
        <taxon>Alphaproteobacteria</taxon>
        <taxon>Hyphomicrobiales</taxon>
        <taxon>Brucellaceae</taxon>
        <taxon>Brucella/Ochrobactrum group</taxon>
        <taxon>Brucella</taxon>
    </lineage>
</organism>
<accession>A9MAE5</accession>
<comment type="function">
    <text evidence="1">Catalyzes the reversible interconversion of serine and glycine with tetrahydrofolate (THF) serving as the one-carbon carrier. This reaction serves as the major source of one-carbon groups required for the biosynthesis of purines, thymidylate, methionine, and other important biomolecules. Also exhibits THF-independent aldolase activity toward beta-hydroxyamino acids, producing glycine and aldehydes, via a retro-aldol mechanism.</text>
</comment>
<comment type="catalytic activity">
    <reaction evidence="1">
        <text>(6R)-5,10-methylene-5,6,7,8-tetrahydrofolate + glycine + H2O = (6S)-5,6,7,8-tetrahydrofolate + L-serine</text>
        <dbReference type="Rhea" id="RHEA:15481"/>
        <dbReference type="ChEBI" id="CHEBI:15377"/>
        <dbReference type="ChEBI" id="CHEBI:15636"/>
        <dbReference type="ChEBI" id="CHEBI:33384"/>
        <dbReference type="ChEBI" id="CHEBI:57305"/>
        <dbReference type="ChEBI" id="CHEBI:57453"/>
        <dbReference type="EC" id="2.1.2.1"/>
    </reaction>
</comment>
<comment type="cofactor">
    <cofactor evidence="1">
        <name>pyridoxal 5'-phosphate</name>
        <dbReference type="ChEBI" id="CHEBI:597326"/>
    </cofactor>
</comment>
<comment type="pathway">
    <text evidence="1">One-carbon metabolism; tetrahydrofolate interconversion.</text>
</comment>
<comment type="pathway">
    <text evidence="1">Amino-acid biosynthesis; glycine biosynthesis; glycine from L-serine: step 1/1.</text>
</comment>
<comment type="subunit">
    <text evidence="1">Homodimer.</text>
</comment>
<comment type="subcellular location">
    <subcellularLocation>
        <location evidence="1">Cytoplasm</location>
    </subcellularLocation>
</comment>
<comment type="similarity">
    <text evidence="1">Belongs to the SHMT family.</text>
</comment>
<protein>
    <recommendedName>
        <fullName evidence="1">Serine hydroxymethyltransferase</fullName>
        <shortName evidence="1">SHMT</shortName>
        <shortName evidence="1">Serine methylase</shortName>
        <ecNumber evidence="1">2.1.2.1</ecNumber>
    </recommendedName>
</protein>
<dbReference type="EC" id="2.1.2.1" evidence="1"/>
<dbReference type="EMBL" id="CP000872">
    <property type="protein sequence ID" value="ABX61848.1"/>
    <property type="molecule type" value="Genomic_DNA"/>
</dbReference>
<dbReference type="RefSeq" id="WP_004690736.1">
    <property type="nucleotide sequence ID" value="NC_010103.1"/>
</dbReference>
<dbReference type="SMR" id="A9MAE5"/>
<dbReference type="GeneID" id="55590479"/>
<dbReference type="KEGG" id="bcs:BCAN_A0778"/>
<dbReference type="HOGENOM" id="CLU_022477_2_1_5"/>
<dbReference type="PhylomeDB" id="A9MAE5"/>
<dbReference type="UniPathway" id="UPA00193"/>
<dbReference type="UniPathway" id="UPA00288">
    <property type="reaction ID" value="UER01023"/>
</dbReference>
<dbReference type="PRO" id="PR:A9MAE5"/>
<dbReference type="Proteomes" id="UP000001385">
    <property type="component" value="Chromosome I"/>
</dbReference>
<dbReference type="GO" id="GO:0005829">
    <property type="term" value="C:cytosol"/>
    <property type="evidence" value="ECO:0007669"/>
    <property type="project" value="TreeGrafter"/>
</dbReference>
<dbReference type="GO" id="GO:0004372">
    <property type="term" value="F:glycine hydroxymethyltransferase activity"/>
    <property type="evidence" value="ECO:0007669"/>
    <property type="project" value="UniProtKB-UniRule"/>
</dbReference>
<dbReference type="GO" id="GO:0030170">
    <property type="term" value="F:pyridoxal phosphate binding"/>
    <property type="evidence" value="ECO:0007669"/>
    <property type="project" value="UniProtKB-UniRule"/>
</dbReference>
<dbReference type="GO" id="GO:0019264">
    <property type="term" value="P:glycine biosynthetic process from serine"/>
    <property type="evidence" value="ECO:0007669"/>
    <property type="project" value="UniProtKB-UniRule"/>
</dbReference>
<dbReference type="GO" id="GO:0035999">
    <property type="term" value="P:tetrahydrofolate interconversion"/>
    <property type="evidence" value="ECO:0007669"/>
    <property type="project" value="UniProtKB-UniRule"/>
</dbReference>
<dbReference type="CDD" id="cd00378">
    <property type="entry name" value="SHMT"/>
    <property type="match status" value="1"/>
</dbReference>
<dbReference type="FunFam" id="3.40.640.10:FF:000001">
    <property type="entry name" value="Serine hydroxymethyltransferase"/>
    <property type="match status" value="1"/>
</dbReference>
<dbReference type="FunFam" id="3.90.1150.10:FF:000003">
    <property type="entry name" value="Serine hydroxymethyltransferase"/>
    <property type="match status" value="1"/>
</dbReference>
<dbReference type="Gene3D" id="3.90.1150.10">
    <property type="entry name" value="Aspartate Aminotransferase, domain 1"/>
    <property type="match status" value="1"/>
</dbReference>
<dbReference type="Gene3D" id="3.40.640.10">
    <property type="entry name" value="Type I PLP-dependent aspartate aminotransferase-like (Major domain)"/>
    <property type="match status" value="1"/>
</dbReference>
<dbReference type="HAMAP" id="MF_00051">
    <property type="entry name" value="SHMT"/>
    <property type="match status" value="1"/>
</dbReference>
<dbReference type="InterPro" id="IPR015424">
    <property type="entry name" value="PyrdxlP-dep_Trfase"/>
</dbReference>
<dbReference type="InterPro" id="IPR015421">
    <property type="entry name" value="PyrdxlP-dep_Trfase_major"/>
</dbReference>
<dbReference type="InterPro" id="IPR015422">
    <property type="entry name" value="PyrdxlP-dep_Trfase_small"/>
</dbReference>
<dbReference type="InterPro" id="IPR001085">
    <property type="entry name" value="Ser_HO-MeTrfase"/>
</dbReference>
<dbReference type="InterPro" id="IPR049943">
    <property type="entry name" value="Ser_HO-MeTrfase-like"/>
</dbReference>
<dbReference type="InterPro" id="IPR019798">
    <property type="entry name" value="Ser_HO-MeTrfase_PLP_BS"/>
</dbReference>
<dbReference type="InterPro" id="IPR039429">
    <property type="entry name" value="SHMT-like_dom"/>
</dbReference>
<dbReference type="NCBIfam" id="NF000586">
    <property type="entry name" value="PRK00011.1"/>
    <property type="match status" value="1"/>
</dbReference>
<dbReference type="PANTHER" id="PTHR11680">
    <property type="entry name" value="SERINE HYDROXYMETHYLTRANSFERASE"/>
    <property type="match status" value="1"/>
</dbReference>
<dbReference type="PANTHER" id="PTHR11680:SF35">
    <property type="entry name" value="SERINE HYDROXYMETHYLTRANSFERASE 1"/>
    <property type="match status" value="1"/>
</dbReference>
<dbReference type="Pfam" id="PF00464">
    <property type="entry name" value="SHMT"/>
    <property type="match status" value="1"/>
</dbReference>
<dbReference type="PIRSF" id="PIRSF000412">
    <property type="entry name" value="SHMT"/>
    <property type="match status" value="1"/>
</dbReference>
<dbReference type="SUPFAM" id="SSF53383">
    <property type="entry name" value="PLP-dependent transferases"/>
    <property type="match status" value="1"/>
</dbReference>
<dbReference type="PROSITE" id="PS00096">
    <property type="entry name" value="SHMT"/>
    <property type="match status" value="1"/>
</dbReference>
<evidence type="ECO:0000255" key="1">
    <source>
        <dbReference type="HAMAP-Rule" id="MF_00051"/>
    </source>
</evidence>
<proteinExistence type="inferred from homology"/>
<reference key="1">
    <citation type="submission" date="2007-10" db="EMBL/GenBank/DDBJ databases">
        <title>Brucella canis ATCC 23365 whole genome shotgun sequencing project.</title>
        <authorList>
            <person name="Setubal J.C."/>
            <person name="Bowns C."/>
            <person name="Boyle S."/>
            <person name="Crasta O.R."/>
            <person name="Czar M.J."/>
            <person name="Dharmanolla C."/>
            <person name="Gillespie J.J."/>
            <person name="Kenyon R.W."/>
            <person name="Lu J."/>
            <person name="Mane S."/>
            <person name="Mohapatra S."/>
            <person name="Nagrani S."/>
            <person name="Purkayastha A."/>
            <person name="Rajasimha H.K."/>
            <person name="Shallom J.M."/>
            <person name="Shallom S."/>
            <person name="Shukla M."/>
            <person name="Snyder E.E."/>
            <person name="Sobral B.W."/>
            <person name="Wattam A.R."/>
            <person name="Will R."/>
            <person name="Williams K."/>
            <person name="Yoo H."/>
            <person name="Bruce D."/>
            <person name="Detter C."/>
            <person name="Munk C."/>
            <person name="Brettin T.S."/>
        </authorList>
    </citation>
    <scope>NUCLEOTIDE SEQUENCE [LARGE SCALE GENOMIC DNA]</scope>
    <source>
        <strain>ATCC 23365 / NCTC 10854 / RM-666</strain>
    </source>
</reference>
<name>GLYA_BRUC2</name>
<gene>
    <name evidence="1" type="primary">glyA</name>
    <name type="ordered locus">BCAN_A0778</name>
</gene>
<sequence>MSQANAATKASSDVFFNASLEDIDPEIFGAIRNELGRQRHEIELIASENIVSRAVLEAQGSILTNKYAEGYPGKRYYGGCQYVDVVEELAIERAKKLFSAEFANVQPNSGSQMNQAVFLALLQPGDTFMGLDLNSGGHLTHGSPVNMSGKWFNVVSYGVRKDDHLLDMDEVARLARENKPKLILAGGTAYSRIWDWKRFREIADEVGAYLMVDMAHIAGLVAGGQHPSPVPHAHVCTTTTHKSLRGPRGGMILTNDADIAKKINSAVFPGLQGGPLMHVIAGKAVAFAEALKLEFKLYAKNVVDNARALAEELKSHGLDIVSGGTDNHLMLVDLRPKNATGKRAEAALGRANITCNKNGIPFDPEKPFVTSGVRLGTPAGTTRGFGVAEFKEIGSLIAEVLDGLKVANSDEGNAAVEQAVKEKVIALTGRFPMYGYQG</sequence>